<dbReference type="EC" id="7.-.-.-" evidence="1"/>
<dbReference type="EMBL" id="AP009240">
    <property type="protein sequence ID" value="BAG77278.1"/>
    <property type="molecule type" value="Genomic_DNA"/>
</dbReference>
<dbReference type="RefSeq" id="WP_001289654.1">
    <property type="nucleotide sequence ID" value="NC_011415.1"/>
</dbReference>
<dbReference type="SMR" id="B6IB70"/>
<dbReference type="KEGG" id="ecy:ECSE_1754"/>
<dbReference type="HOGENOM" id="CLU_046659_1_0_6"/>
<dbReference type="Proteomes" id="UP000008199">
    <property type="component" value="Chromosome"/>
</dbReference>
<dbReference type="GO" id="GO:0005886">
    <property type="term" value="C:plasma membrane"/>
    <property type="evidence" value="ECO:0007669"/>
    <property type="project" value="UniProtKB-SubCell"/>
</dbReference>
<dbReference type="GO" id="GO:0022900">
    <property type="term" value="P:electron transport chain"/>
    <property type="evidence" value="ECO:0007669"/>
    <property type="project" value="UniProtKB-UniRule"/>
</dbReference>
<dbReference type="HAMAP" id="MF_00478">
    <property type="entry name" value="RsxE_RnfE"/>
    <property type="match status" value="1"/>
</dbReference>
<dbReference type="InterPro" id="IPR003667">
    <property type="entry name" value="NqrDE/RnfAE"/>
</dbReference>
<dbReference type="InterPro" id="IPR010968">
    <property type="entry name" value="RnfE"/>
</dbReference>
<dbReference type="NCBIfam" id="NF009070">
    <property type="entry name" value="PRK12405.1"/>
    <property type="match status" value="1"/>
</dbReference>
<dbReference type="NCBIfam" id="TIGR01948">
    <property type="entry name" value="rnfE"/>
    <property type="match status" value="1"/>
</dbReference>
<dbReference type="PANTHER" id="PTHR30586">
    <property type="entry name" value="ELECTRON TRANSPORT COMPLEX PROTEIN RNFE"/>
    <property type="match status" value="1"/>
</dbReference>
<dbReference type="PANTHER" id="PTHR30586:SF0">
    <property type="entry name" value="ION-TRANSLOCATING OXIDOREDUCTASE COMPLEX SUBUNIT E"/>
    <property type="match status" value="1"/>
</dbReference>
<dbReference type="Pfam" id="PF02508">
    <property type="entry name" value="Rnf-Nqr"/>
    <property type="match status" value="1"/>
</dbReference>
<dbReference type="PIRSF" id="PIRSF006102">
    <property type="entry name" value="NQR_DE"/>
    <property type="match status" value="1"/>
</dbReference>
<comment type="function">
    <text evidence="1">Part of a membrane-bound complex that couples electron transfer with translocation of ions across the membrane. Required to maintain the reduced state of SoxR.</text>
</comment>
<comment type="subunit">
    <text evidence="1">The complex is composed of six subunits: RsxA, RsxB, RsxC, RsxD, RsxE and RsxG.</text>
</comment>
<comment type="subcellular location">
    <subcellularLocation>
        <location evidence="1">Cell inner membrane</location>
        <topology evidence="1">Multi-pass membrane protein</topology>
    </subcellularLocation>
</comment>
<comment type="similarity">
    <text evidence="1">Belongs to the NqrDE/RnfAE family.</text>
</comment>
<proteinExistence type="inferred from homology"/>
<organism>
    <name type="scientific">Escherichia coli (strain SE11)</name>
    <dbReference type="NCBI Taxonomy" id="409438"/>
    <lineage>
        <taxon>Bacteria</taxon>
        <taxon>Pseudomonadati</taxon>
        <taxon>Pseudomonadota</taxon>
        <taxon>Gammaproteobacteria</taxon>
        <taxon>Enterobacterales</taxon>
        <taxon>Enterobacteriaceae</taxon>
        <taxon>Escherichia</taxon>
    </lineage>
</organism>
<keyword id="KW-0997">Cell inner membrane</keyword>
<keyword id="KW-1003">Cell membrane</keyword>
<keyword id="KW-0249">Electron transport</keyword>
<keyword id="KW-0472">Membrane</keyword>
<keyword id="KW-1278">Translocase</keyword>
<keyword id="KW-0812">Transmembrane</keyword>
<keyword id="KW-1133">Transmembrane helix</keyword>
<keyword id="KW-0813">Transport</keyword>
<sequence length="231" mass="24489">MSEIKDVIVQGLWKNNSALVQLLGLCPLLAVTSTATNALGLGLATTLVLTLTNLTISTLRHWTPAEIRIPIYVMIIASVVSAVQMLINAYAFGLYQSLGIFIPLIVTNCIVVGRAEAFAAKKGPALSALDGFSIGMGATCAMFVLGSLREIIGNGTLFDGADALLGSWAKVLRVEIFHTDSPFLLAMLPPGAFIGLGLMLAGKYLIDERMKKRRAEATAERALPNGETGNV</sequence>
<evidence type="ECO:0000255" key="1">
    <source>
        <dbReference type="HAMAP-Rule" id="MF_00478"/>
    </source>
</evidence>
<reference key="1">
    <citation type="journal article" date="2008" name="DNA Res.">
        <title>Complete genome sequence and comparative analysis of the wild-type commensal Escherichia coli strain SE11 isolated from a healthy adult.</title>
        <authorList>
            <person name="Oshima K."/>
            <person name="Toh H."/>
            <person name="Ogura Y."/>
            <person name="Sasamoto H."/>
            <person name="Morita H."/>
            <person name="Park S.-H."/>
            <person name="Ooka T."/>
            <person name="Iyoda S."/>
            <person name="Taylor T.D."/>
            <person name="Hayashi T."/>
            <person name="Itoh K."/>
            <person name="Hattori M."/>
        </authorList>
    </citation>
    <scope>NUCLEOTIDE SEQUENCE [LARGE SCALE GENOMIC DNA]</scope>
    <source>
        <strain>SE11</strain>
    </source>
</reference>
<accession>B6IB70</accession>
<name>RSXE_ECOSE</name>
<protein>
    <recommendedName>
        <fullName evidence="1">Ion-translocating oxidoreductase complex subunit E</fullName>
        <ecNumber evidence="1">7.-.-.-</ecNumber>
    </recommendedName>
    <alternativeName>
        <fullName evidence="1">Rsx electron transport complex subunit E</fullName>
    </alternativeName>
</protein>
<gene>
    <name evidence="1" type="primary">rsxE</name>
    <name type="ordered locus">ECSE_1754</name>
</gene>
<feature type="chain" id="PRO_1000125852" description="Ion-translocating oxidoreductase complex subunit E">
    <location>
        <begin position="1"/>
        <end position="231"/>
    </location>
</feature>
<feature type="transmembrane region" description="Helical" evidence="1">
    <location>
        <begin position="18"/>
        <end position="38"/>
    </location>
</feature>
<feature type="transmembrane region" description="Helical" evidence="1">
    <location>
        <begin position="39"/>
        <end position="59"/>
    </location>
</feature>
<feature type="transmembrane region" description="Helical" evidence="1">
    <location>
        <begin position="63"/>
        <end position="83"/>
    </location>
</feature>
<feature type="transmembrane region" description="Helical" evidence="1">
    <location>
        <begin position="86"/>
        <end position="106"/>
    </location>
</feature>
<feature type="transmembrane region" description="Helical" evidence="1">
    <location>
        <begin position="125"/>
        <end position="145"/>
    </location>
</feature>
<feature type="transmembrane region" description="Helical" evidence="1">
    <location>
        <begin position="182"/>
        <end position="202"/>
    </location>
</feature>